<accession>P15473</accession>
<keyword id="KW-0053">Apoptosis</keyword>
<keyword id="KW-0903">Direct protein sequencing</keyword>
<keyword id="KW-1015">Disulfide bond</keyword>
<keyword id="KW-0325">Glycoprotein</keyword>
<keyword id="KW-0340">Growth factor binding</keyword>
<keyword id="KW-0539">Nucleus</keyword>
<keyword id="KW-0597">Phosphoprotein</keyword>
<keyword id="KW-1185">Reference proteome</keyword>
<keyword id="KW-0964">Secreted</keyword>
<keyword id="KW-0732">Signal</keyword>
<proteinExistence type="evidence at protein level"/>
<comment type="function">
    <text evidence="2">Multifunctional protein that plays a critical role in regulating the availability of IGFs such as IGF1 and IGF2 to their receptors and thereby regulates IGF-mediated cellular processes including proliferation, differentiation, and apoptosis in a cell-type specific manner. Also exhibits IGF-independent antiproliferative and apoptotic effects mediated by its receptor TMEM219/IGFBP-3R. Inhibits the positive effect of humanin on insulin sensitivity. Promotes testicular germ cell apoptosis. Acts via LRP-1/alpha2M receptor, also known as TGF-beta type V receptor, to mediate cell growth inhibition independent of IGF1. Mechanistically, induces serine-specific dephosphorylation of IRS1 or IRS2 upon ligation to its receptor, leading to the inhibitory cascade. In the nucleus, interacts with transcription factors such as retinoid X receptor-alpha/RXRA to regulate transcriptional signaling and apoptosis.</text>
</comment>
<comment type="subunit">
    <text evidence="1 2">Interacts with XLKD1 (By similarity). Binds IGF2 more than IGF1. Forms a ternary complex of about 140 to 150 kDa with IGF1 or IGF2 and a 85 kDa glycoprotein (ALS). Interacts with humanin; humanin competes with importin KPNB1 for binding to IGFBP3, blocking IGFBP3 nuclear import and IGFBP3-mediated apoptosis. Interacts with TMEM219. Interacts with RXRA; this interaction modulates the transcriptional activity of RXRA. Interacts with LRP1; this interaction mediates cell growth inhibition independent of IGF1 (By similarity).</text>
</comment>
<comment type="subcellular location">
    <subcellularLocation>
        <location evidence="2">Secreted</location>
    </subcellularLocation>
    <subcellularLocation>
        <location evidence="2">Nucleus</location>
    </subcellularLocation>
</comment>
<comment type="PTM">
    <text evidence="2">Phosphorylated by FAM20C in the extracellular medium. Phosphorylated by CK2; resulting in decreased nuclear localization.</text>
</comment>
<organism>
    <name type="scientific">Rattus norvegicus</name>
    <name type="common">Rat</name>
    <dbReference type="NCBI Taxonomy" id="10116"/>
    <lineage>
        <taxon>Eukaryota</taxon>
        <taxon>Metazoa</taxon>
        <taxon>Chordata</taxon>
        <taxon>Craniata</taxon>
        <taxon>Vertebrata</taxon>
        <taxon>Euteleostomi</taxon>
        <taxon>Mammalia</taxon>
        <taxon>Eutheria</taxon>
        <taxon>Euarchontoglires</taxon>
        <taxon>Glires</taxon>
        <taxon>Rodentia</taxon>
        <taxon>Myomorpha</taxon>
        <taxon>Muroidea</taxon>
        <taxon>Muridae</taxon>
        <taxon>Murinae</taxon>
        <taxon>Rattus</taxon>
    </lineage>
</organism>
<dbReference type="EMBL" id="M31837">
    <property type="protein sequence ID" value="AAA41383.1"/>
    <property type="molecule type" value="mRNA"/>
</dbReference>
<dbReference type="EMBL" id="M33300">
    <property type="protein sequence ID" value="AAB00989.1"/>
    <property type="molecule type" value="mRNA"/>
</dbReference>
<dbReference type="PIR" id="A36748">
    <property type="entry name" value="A36748"/>
</dbReference>
<dbReference type="RefSeq" id="NP_036720.2">
    <property type="nucleotide sequence ID" value="NM_012588.2"/>
</dbReference>
<dbReference type="SMR" id="P15473"/>
<dbReference type="FunCoup" id="P15473">
    <property type="interactions" value="287"/>
</dbReference>
<dbReference type="STRING" id="10116.ENSRNOP00000073137"/>
<dbReference type="MEROPS" id="I31.952"/>
<dbReference type="GlyCosmos" id="P15473">
    <property type="glycosylation" value="4 sites, No reported glycans"/>
</dbReference>
<dbReference type="GlyGen" id="P15473">
    <property type="glycosylation" value="5 sites"/>
</dbReference>
<dbReference type="PhosphoSitePlus" id="P15473"/>
<dbReference type="PaxDb" id="10116-ENSRNOP00000011678"/>
<dbReference type="DNASU" id="24484"/>
<dbReference type="GeneID" id="24484"/>
<dbReference type="KEGG" id="rno:24484"/>
<dbReference type="UCSC" id="RGD:2874">
    <property type="organism name" value="rat"/>
</dbReference>
<dbReference type="AGR" id="RGD:2874"/>
<dbReference type="CTD" id="3486"/>
<dbReference type="RGD" id="2874">
    <property type="gene designation" value="Igfbp3"/>
</dbReference>
<dbReference type="eggNOG" id="ENOG502QWC0">
    <property type="taxonomic scope" value="Eukaryota"/>
</dbReference>
<dbReference type="InParanoid" id="P15473"/>
<dbReference type="OrthoDB" id="6068400at2759"/>
<dbReference type="PhylomeDB" id="P15473"/>
<dbReference type="Reactome" id="R-RNO-381426">
    <property type="pathway name" value="Regulation of Insulin-like Growth Factor (IGF) transport and uptake by Insulin-like Growth Factor Binding Proteins (IGFBPs)"/>
</dbReference>
<dbReference type="Reactome" id="R-RNO-6803211">
    <property type="pathway name" value="TP53 Regulates Transcription of Death Receptors and Ligands"/>
</dbReference>
<dbReference type="Reactome" id="R-RNO-8957275">
    <property type="pathway name" value="Post-translational protein phosphorylation"/>
</dbReference>
<dbReference type="PRO" id="PR:P15473"/>
<dbReference type="Proteomes" id="UP000002494">
    <property type="component" value="Unplaced"/>
</dbReference>
<dbReference type="GO" id="GO:0005615">
    <property type="term" value="C:extracellular space"/>
    <property type="evidence" value="ECO:0000314"/>
    <property type="project" value="RGD"/>
</dbReference>
<dbReference type="GO" id="GO:0000792">
    <property type="term" value="C:heterochromatin"/>
    <property type="evidence" value="ECO:0000314"/>
    <property type="project" value="RGD"/>
</dbReference>
<dbReference type="GO" id="GO:0042568">
    <property type="term" value="C:insulin-like growth factor binary complex"/>
    <property type="evidence" value="ECO:0000314"/>
    <property type="project" value="RGD"/>
</dbReference>
<dbReference type="GO" id="GO:0042567">
    <property type="term" value="C:insulin-like growth factor ternary complex"/>
    <property type="evidence" value="ECO:0000314"/>
    <property type="project" value="RGD"/>
</dbReference>
<dbReference type="GO" id="GO:0005634">
    <property type="term" value="C:nucleus"/>
    <property type="evidence" value="ECO:0000266"/>
    <property type="project" value="RGD"/>
</dbReference>
<dbReference type="GO" id="GO:0031091">
    <property type="term" value="C:platelet alpha granule"/>
    <property type="evidence" value="ECO:0000314"/>
    <property type="project" value="RGD"/>
</dbReference>
<dbReference type="GO" id="GO:0001968">
    <property type="term" value="F:fibronectin binding"/>
    <property type="evidence" value="ECO:0000266"/>
    <property type="project" value="RGD"/>
</dbReference>
<dbReference type="GO" id="GO:0005520">
    <property type="term" value="F:insulin-like growth factor binding"/>
    <property type="evidence" value="ECO:0000266"/>
    <property type="project" value="RGD"/>
</dbReference>
<dbReference type="GO" id="GO:0031994">
    <property type="term" value="F:insulin-like growth factor I binding"/>
    <property type="evidence" value="ECO:0000266"/>
    <property type="project" value="RGD"/>
</dbReference>
<dbReference type="GO" id="GO:0031995">
    <property type="term" value="F:insulin-like growth factor II binding"/>
    <property type="evidence" value="ECO:0000353"/>
    <property type="project" value="RGD"/>
</dbReference>
<dbReference type="GO" id="GO:0008160">
    <property type="term" value="F:protein tyrosine phosphatase activator activity"/>
    <property type="evidence" value="ECO:0000250"/>
    <property type="project" value="UniProtKB"/>
</dbReference>
<dbReference type="GO" id="GO:0006915">
    <property type="term" value="P:apoptotic process"/>
    <property type="evidence" value="ECO:0007669"/>
    <property type="project" value="UniProtKB-KW"/>
</dbReference>
<dbReference type="GO" id="GO:0071392">
    <property type="term" value="P:cellular response to estradiol stimulus"/>
    <property type="evidence" value="ECO:0000270"/>
    <property type="project" value="RGD"/>
</dbReference>
<dbReference type="GO" id="GO:1904017">
    <property type="term" value="P:cellular response to Thyroglobulin triiodothyronine"/>
    <property type="evidence" value="ECO:0000270"/>
    <property type="project" value="RGD"/>
</dbReference>
<dbReference type="GO" id="GO:0007565">
    <property type="term" value="P:female pregnancy"/>
    <property type="evidence" value="ECO:0000270"/>
    <property type="project" value="RGD"/>
</dbReference>
<dbReference type="GO" id="GO:0000165">
    <property type="term" value="P:MAPK cascade"/>
    <property type="evidence" value="ECO:0000266"/>
    <property type="project" value="RGD"/>
</dbReference>
<dbReference type="GO" id="GO:0008285">
    <property type="term" value="P:negative regulation of cell population proliferation"/>
    <property type="evidence" value="ECO:0000315"/>
    <property type="project" value="RGD"/>
</dbReference>
<dbReference type="GO" id="GO:0014912">
    <property type="term" value="P:negative regulation of smooth muscle cell migration"/>
    <property type="evidence" value="ECO:0000266"/>
    <property type="project" value="RGD"/>
</dbReference>
<dbReference type="GO" id="GO:0048662">
    <property type="term" value="P:negative regulation of smooth muscle cell proliferation"/>
    <property type="evidence" value="ECO:0000266"/>
    <property type="project" value="RGD"/>
</dbReference>
<dbReference type="GO" id="GO:2000844">
    <property type="term" value="P:negative regulation of testosterone secretion"/>
    <property type="evidence" value="ECO:0000315"/>
    <property type="project" value="RGD"/>
</dbReference>
<dbReference type="GO" id="GO:0001649">
    <property type="term" value="P:osteoblast differentiation"/>
    <property type="evidence" value="ECO:0000266"/>
    <property type="project" value="RGD"/>
</dbReference>
<dbReference type="GO" id="GO:1902512">
    <property type="term" value="P:positive regulation of apoptotic DNA fragmentation"/>
    <property type="evidence" value="ECO:0000315"/>
    <property type="project" value="RGD"/>
</dbReference>
<dbReference type="GO" id="GO:0043065">
    <property type="term" value="P:positive regulation of apoptotic process"/>
    <property type="evidence" value="ECO:0000315"/>
    <property type="project" value="RGD"/>
</dbReference>
<dbReference type="GO" id="GO:0010666">
    <property type="term" value="P:positive regulation of cardiac muscle cell apoptotic process"/>
    <property type="evidence" value="ECO:0000315"/>
    <property type="project" value="RGD"/>
</dbReference>
<dbReference type="GO" id="GO:0043568">
    <property type="term" value="P:positive regulation of insulin-like growth factor receptor signaling pathway"/>
    <property type="evidence" value="ECO:0000266"/>
    <property type="project" value="RGD"/>
</dbReference>
<dbReference type="GO" id="GO:0043410">
    <property type="term" value="P:positive regulation of MAPK cascade"/>
    <property type="evidence" value="ECO:0000266"/>
    <property type="project" value="RGD"/>
</dbReference>
<dbReference type="GO" id="GO:0045663">
    <property type="term" value="P:positive regulation of myoblast differentiation"/>
    <property type="evidence" value="ECO:0000250"/>
    <property type="project" value="UniProtKB"/>
</dbReference>
<dbReference type="GO" id="GO:0001558">
    <property type="term" value="P:regulation of cell growth"/>
    <property type="evidence" value="ECO:0000266"/>
    <property type="project" value="RGD"/>
</dbReference>
<dbReference type="GO" id="GO:0010906">
    <property type="term" value="P:regulation of glucose metabolic process"/>
    <property type="evidence" value="ECO:0000266"/>
    <property type="project" value="RGD"/>
</dbReference>
<dbReference type="GO" id="GO:0040008">
    <property type="term" value="P:regulation of growth"/>
    <property type="evidence" value="ECO:0000266"/>
    <property type="project" value="RGD"/>
</dbReference>
<dbReference type="GO" id="GO:0043567">
    <property type="term" value="P:regulation of insulin-like growth factor receptor signaling pathway"/>
    <property type="evidence" value="ECO:0000318"/>
    <property type="project" value="GO_Central"/>
</dbReference>
<dbReference type="GO" id="GO:0061771">
    <property type="term" value="P:response to caloric restriction"/>
    <property type="evidence" value="ECO:0000270"/>
    <property type="project" value="RGD"/>
</dbReference>
<dbReference type="GO" id="GO:0060416">
    <property type="term" value="P:response to growth hormone"/>
    <property type="evidence" value="ECO:0000270"/>
    <property type="project" value="RGD"/>
</dbReference>
<dbReference type="GO" id="GO:0001666">
    <property type="term" value="P:response to hypoxia"/>
    <property type="evidence" value="ECO:0000270"/>
    <property type="project" value="RGD"/>
</dbReference>
<dbReference type="GO" id="GO:0032868">
    <property type="term" value="P:response to insulin"/>
    <property type="evidence" value="ECO:0000270"/>
    <property type="project" value="RGD"/>
</dbReference>
<dbReference type="GO" id="GO:1990418">
    <property type="term" value="P:response to insulin-like growth factor stimulus"/>
    <property type="evidence" value="ECO:0000270"/>
    <property type="project" value="RGD"/>
</dbReference>
<dbReference type="GO" id="GO:0032496">
    <property type="term" value="P:response to lipopolysaccharide"/>
    <property type="evidence" value="ECO:0000270"/>
    <property type="project" value="RGD"/>
</dbReference>
<dbReference type="GO" id="GO:0009410">
    <property type="term" value="P:response to xenobiotic stimulus"/>
    <property type="evidence" value="ECO:0000270"/>
    <property type="project" value="RGD"/>
</dbReference>
<dbReference type="GO" id="GO:0044342">
    <property type="term" value="P:type B pancreatic cell proliferation"/>
    <property type="evidence" value="ECO:0000266"/>
    <property type="project" value="RGD"/>
</dbReference>
<dbReference type="CDD" id="cd00191">
    <property type="entry name" value="TY"/>
    <property type="match status" value="1"/>
</dbReference>
<dbReference type="FunFam" id="4.10.40.20:FF:000001">
    <property type="entry name" value="Insulin-like growth factor binding protein 5"/>
    <property type="match status" value="1"/>
</dbReference>
<dbReference type="FunFam" id="4.10.800.10:FF:000005">
    <property type="entry name" value="Putative insulin-like growth factor-binding protein 5"/>
    <property type="match status" value="1"/>
</dbReference>
<dbReference type="Gene3D" id="4.10.40.20">
    <property type="match status" value="1"/>
</dbReference>
<dbReference type="Gene3D" id="4.10.800.10">
    <property type="entry name" value="Thyroglobulin type-1"/>
    <property type="match status" value="1"/>
</dbReference>
<dbReference type="InterPro" id="IPR009030">
    <property type="entry name" value="Growth_fac_rcpt_cys_sf"/>
</dbReference>
<dbReference type="InterPro" id="IPR012211">
    <property type="entry name" value="IGFBP-3"/>
</dbReference>
<dbReference type="InterPro" id="IPR000867">
    <property type="entry name" value="IGFBP-like"/>
</dbReference>
<dbReference type="InterPro" id="IPR022321">
    <property type="entry name" value="IGFBP_1-6_chordata"/>
</dbReference>
<dbReference type="InterPro" id="IPR017891">
    <property type="entry name" value="Insulin_GF-bd_Cys-rich_CS"/>
</dbReference>
<dbReference type="InterPro" id="IPR000716">
    <property type="entry name" value="Thyroglobulin_1"/>
</dbReference>
<dbReference type="InterPro" id="IPR036857">
    <property type="entry name" value="Thyroglobulin_1_sf"/>
</dbReference>
<dbReference type="PANTHER" id="PTHR11551">
    <property type="entry name" value="INSULIN-LIKE GROWTH FACTOR BINDING PROTEIN"/>
    <property type="match status" value="1"/>
</dbReference>
<dbReference type="PANTHER" id="PTHR11551:SF3">
    <property type="entry name" value="INSULIN-LIKE GROWTH FACTOR-BINDING PROTEIN 3"/>
    <property type="match status" value="1"/>
</dbReference>
<dbReference type="Pfam" id="PF00219">
    <property type="entry name" value="IGFBP"/>
    <property type="match status" value="1"/>
</dbReference>
<dbReference type="Pfam" id="PF00086">
    <property type="entry name" value="Thyroglobulin_1"/>
    <property type="match status" value="1"/>
</dbReference>
<dbReference type="PRINTS" id="PR01976">
    <property type="entry name" value="IGFBPFAMILY"/>
</dbReference>
<dbReference type="PRINTS" id="PR01979">
    <property type="entry name" value="IGFBPFAMILY3"/>
</dbReference>
<dbReference type="SMART" id="SM00121">
    <property type="entry name" value="IB"/>
    <property type="match status" value="1"/>
</dbReference>
<dbReference type="SMART" id="SM00211">
    <property type="entry name" value="TY"/>
    <property type="match status" value="1"/>
</dbReference>
<dbReference type="SUPFAM" id="SSF57184">
    <property type="entry name" value="Growth factor receptor domain"/>
    <property type="match status" value="1"/>
</dbReference>
<dbReference type="SUPFAM" id="SSF57610">
    <property type="entry name" value="Thyroglobulin type-1 domain"/>
    <property type="match status" value="1"/>
</dbReference>
<dbReference type="PROSITE" id="PS00222">
    <property type="entry name" value="IGFBP_N_1"/>
    <property type="match status" value="1"/>
</dbReference>
<dbReference type="PROSITE" id="PS51323">
    <property type="entry name" value="IGFBP_N_2"/>
    <property type="match status" value="1"/>
</dbReference>
<dbReference type="PROSITE" id="PS00484">
    <property type="entry name" value="THYROGLOBULIN_1_1"/>
    <property type="match status" value="1"/>
</dbReference>
<dbReference type="PROSITE" id="PS51162">
    <property type="entry name" value="THYROGLOBULIN_1_2"/>
    <property type="match status" value="1"/>
</dbReference>
<gene>
    <name type="primary">Igfbp3</name>
    <name type="synonym">Igfbp-3</name>
</gene>
<protein>
    <recommendedName>
        <fullName>Insulin-like growth factor-binding protein 3</fullName>
        <shortName>IBP-3</shortName>
        <shortName>IGF-binding protein 3</shortName>
        <shortName>IGFBP-3</shortName>
    </recommendedName>
</protein>
<sequence>MHPARPALWAAALTALTLLRGPPVARAGAGAVGAGPVVRCEPCDARALAQCAPPPTAPACTELVREPGCGCCLTCALREGDACGVYTERCGTGLRCQPRPAEQYPLKALLNGRGFCANASAASNLSAYLPSQPSPGNTTESEEDHNAGSVESQVVPSTHRVTDSKFHPLHSKMEVIIKGQARDSQRYKVDYESQSTDTQNFSSESKRETEYGPCRREMEDTLNHLKFLNVLSPRGVHIPNCDKKGFYKKKQCRPSKGRKRGFCWCVDKYGQPLPGYDTKGKDDVHCLSVQSQ</sequence>
<reference key="1">
    <citation type="journal article" date="1989" name="Biochem. Biophys. Res. Commun.">
        <title>Complementary DNA structure of the high molecular weight rat insulin-like growth factor binding protein (IGF-BP3) and tissue distribution of its mRNA.</title>
        <authorList>
            <person name="Shimasaki S."/>
            <person name="Koba A."/>
            <person name="Mercado M."/>
            <person name="Shimonaka M."/>
            <person name="Ling N."/>
        </authorList>
    </citation>
    <scope>NUCLEOTIDE SEQUENCE [MRNA]</scope>
</reference>
<reference key="2">
    <citation type="journal article" date="1990" name="Biochem. Biophys. Res. Commun.">
        <title>Cloning and characterization of the growth hormone-dependent insulin-like growth factor binding protein (IGFBP-3) in the rat.</title>
        <authorList>
            <person name="Albiston A.L."/>
            <person name="Herington A.C."/>
        </authorList>
    </citation>
    <scope>NUCLEOTIDE SEQUENCE [MRNA]</scope>
    <source>
        <tissue>Liver</tissue>
    </source>
</reference>
<reference key="3">
    <citation type="journal article" date="1988" name="Biochem. Biophys. Res. Commun.">
        <title>Isolation and NH2-terminal amino acid sequences of rat serum carrier proteins for insulin-like growth factors.</title>
        <authorList>
            <person name="Zapf J."/>
            <person name="Born W."/>
            <person name="Chang J.Y."/>
            <person name="James P."/>
            <person name="Froesch E.R."/>
            <person name="Fischer J.A."/>
        </authorList>
    </citation>
    <scope>PROTEIN SEQUENCE OF 28-68</scope>
</reference>
<reference key="4">
    <citation type="journal article" date="1987" name="Biochem. Biophys. Res. Commun.">
        <title>Binding proteins for insulin-like growth factors in adult rat serum. Comparison with other human and rat binding proteins.</title>
        <authorList>
            <person name="Baxter R.C."/>
            <person name="Martin J.L."/>
        </authorList>
    </citation>
    <scope>PROTEIN SEQUENCE OF 28-42</scope>
</reference>
<reference key="5">
    <citation type="journal article" date="1989" name="Biochem. Biophys. Res. Commun.">
        <title>Identification of a novel binding protein for insulin-like growth factors in adult rat serum.</title>
        <authorList>
            <person name="Shimonaka M."/>
            <person name="Schroeder R."/>
            <person name="Shimasaki S."/>
            <person name="Ling N."/>
        </authorList>
    </citation>
    <scope>PROTEIN SEQUENCE OF 28-49</scope>
    <source>
        <tissue>Serum</tissue>
    </source>
</reference>
<evidence type="ECO:0000250" key="1"/>
<evidence type="ECO:0000250" key="2">
    <source>
        <dbReference type="UniProtKB" id="P17936"/>
    </source>
</evidence>
<evidence type="ECO:0000255" key="3"/>
<evidence type="ECO:0000255" key="4">
    <source>
        <dbReference type="PROSITE-ProRule" id="PRU00500"/>
    </source>
</evidence>
<evidence type="ECO:0000255" key="5">
    <source>
        <dbReference type="PROSITE-ProRule" id="PRU00653"/>
    </source>
</evidence>
<evidence type="ECO:0000256" key="6">
    <source>
        <dbReference type="SAM" id="MobiDB-lite"/>
    </source>
</evidence>
<evidence type="ECO:0000269" key="7">
    <source>
    </source>
</evidence>
<evidence type="ECO:0000269" key="8">
    <source>
    </source>
</evidence>
<evidence type="ECO:0000269" key="9">
    <source>
    </source>
</evidence>
<evidence type="ECO:0000305" key="10"/>
<feature type="signal peptide" evidence="7 8 9">
    <location>
        <begin position="1"/>
        <end position="27"/>
    </location>
</feature>
<feature type="chain" id="PRO_0000014380" description="Insulin-like growth factor-binding protein 3">
    <location>
        <begin position="28"/>
        <end position="292"/>
    </location>
</feature>
<feature type="domain" description="IGFBP N-terminal" evidence="5">
    <location>
        <begin position="36"/>
        <end position="119"/>
    </location>
</feature>
<feature type="domain" description="Thyroglobulin type-1" evidence="4">
    <location>
        <begin position="211"/>
        <end position="286"/>
    </location>
</feature>
<feature type="region of interest" description="Disordered" evidence="6">
    <location>
        <begin position="127"/>
        <end position="161"/>
    </location>
</feature>
<feature type="region of interest" description="Disordered" evidence="6">
    <location>
        <begin position="191"/>
        <end position="211"/>
    </location>
</feature>
<feature type="compositionally biased region" description="Polar residues" evidence="6">
    <location>
        <begin position="129"/>
        <end position="139"/>
    </location>
</feature>
<feature type="compositionally biased region" description="Polar residues" evidence="6">
    <location>
        <begin position="192"/>
        <end position="203"/>
    </location>
</feature>
<feature type="modified residue" description="Phosphoserine" evidence="2">
    <location>
        <position position="149"/>
    </location>
</feature>
<feature type="modified residue" description="Phosphoserine" evidence="2">
    <location>
        <position position="202"/>
    </location>
</feature>
<feature type="glycosylation site" description="N-linked (GlcNAc...) asparagine" evidence="3">
    <location>
        <position position="118"/>
    </location>
</feature>
<feature type="glycosylation site" description="N-linked (GlcNAc...) asparagine" evidence="3">
    <location>
        <position position="124"/>
    </location>
</feature>
<feature type="glycosylation site" description="N-linked (GlcNAc...) asparagine" evidence="3">
    <location>
        <position position="137"/>
    </location>
</feature>
<feature type="glycosylation site" description="N-linked (GlcNAc...) asparagine" evidence="3">
    <location>
        <position position="200"/>
    </location>
</feature>
<feature type="disulfide bond" evidence="5">
    <location>
        <begin position="40"/>
        <end position="69"/>
    </location>
</feature>
<feature type="disulfide bond" evidence="5">
    <location>
        <begin position="43"/>
        <end position="71"/>
    </location>
</feature>
<feature type="disulfide bond" evidence="5">
    <location>
        <begin position="51"/>
        <end position="72"/>
    </location>
</feature>
<feature type="disulfide bond" evidence="5">
    <location>
        <begin position="60"/>
        <end position="75"/>
    </location>
</feature>
<feature type="disulfide bond" evidence="5">
    <location>
        <begin position="83"/>
        <end position="96"/>
    </location>
</feature>
<feature type="disulfide bond" evidence="5">
    <location>
        <begin position="90"/>
        <end position="116"/>
    </location>
</feature>
<feature type="disulfide bond" evidence="4">
    <location>
        <begin position="214"/>
        <end position="241"/>
    </location>
</feature>
<feature type="disulfide bond" evidence="4">
    <location>
        <begin position="252"/>
        <end position="263"/>
    </location>
</feature>
<feature type="disulfide bond" evidence="4">
    <location>
        <begin position="265"/>
        <end position="286"/>
    </location>
</feature>
<feature type="sequence conflict" description="In Ref. 2; AAB00989." evidence="10" ref="2">
    <location>
        <position position="8"/>
    </location>
</feature>
<name>IBP3_RAT</name>